<dbReference type="EC" id="1.8.4.11" evidence="1"/>
<dbReference type="EMBL" id="AE014133">
    <property type="protein sequence ID" value="AAN59263.1"/>
    <property type="molecule type" value="Genomic_DNA"/>
</dbReference>
<dbReference type="RefSeq" id="NP_721957.1">
    <property type="nucleotide sequence ID" value="NC_004350.2"/>
</dbReference>
<dbReference type="RefSeq" id="WP_002262768.1">
    <property type="nucleotide sequence ID" value="NC_004350.2"/>
</dbReference>
<dbReference type="SMR" id="Q8DSY4"/>
<dbReference type="STRING" id="210007.SMU_1622"/>
<dbReference type="KEGG" id="smu:SMU_1622"/>
<dbReference type="PATRIC" id="fig|210007.7.peg.1445"/>
<dbReference type="eggNOG" id="COG0225">
    <property type="taxonomic scope" value="Bacteria"/>
</dbReference>
<dbReference type="HOGENOM" id="CLU_031040_10_1_9"/>
<dbReference type="OrthoDB" id="4174719at2"/>
<dbReference type="PhylomeDB" id="Q8DSY4"/>
<dbReference type="Proteomes" id="UP000002512">
    <property type="component" value="Chromosome"/>
</dbReference>
<dbReference type="GO" id="GO:0033744">
    <property type="term" value="F:L-methionine:thioredoxin-disulfide S-oxidoreductase activity"/>
    <property type="evidence" value="ECO:0007669"/>
    <property type="project" value="RHEA"/>
</dbReference>
<dbReference type="GO" id="GO:0008113">
    <property type="term" value="F:peptide-methionine (S)-S-oxide reductase activity"/>
    <property type="evidence" value="ECO:0007669"/>
    <property type="project" value="UniProtKB-UniRule"/>
</dbReference>
<dbReference type="GO" id="GO:0036211">
    <property type="term" value="P:protein modification process"/>
    <property type="evidence" value="ECO:0007669"/>
    <property type="project" value="UniProtKB-UniRule"/>
</dbReference>
<dbReference type="Gene3D" id="3.30.1060.10">
    <property type="entry name" value="Peptide methionine sulphoxide reductase MsrA"/>
    <property type="match status" value="1"/>
</dbReference>
<dbReference type="HAMAP" id="MF_01401">
    <property type="entry name" value="MsrA"/>
    <property type="match status" value="1"/>
</dbReference>
<dbReference type="InterPro" id="IPR002569">
    <property type="entry name" value="Met_Sox_Rdtase_MsrA_dom"/>
</dbReference>
<dbReference type="InterPro" id="IPR036509">
    <property type="entry name" value="Met_Sox_Rdtase_MsrA_sf"/>
</dbReference>
<dbReference type="NCBIfam" id="TIGR00401">
    <property type="entry name" value="msrA"/>
    <property type="match status" value="1"/>
</dbReference>
<dbReference type="PANTHER" id="PTHR43774">
    <property type="entry name" value="PEPTIDE METHIONINE SULFOXIDE REDUCTASE"/>
    <property type="match status" value="1"/>
</dbReference>
<dbReference type="PANTHER" id="PTHR43774:SF1">
    <property type="entry name" value="PEPTIDE METHIONINE SULFOXIDE REDUCTASE MSRA 2"/>
    <property type="match status" value="1"/>
</dbReference>
<dbReference type="Pfam" id="PF01625">
    <property type="entry name" value="PMSR"/>
    <property type="match status" value="1"/>
</dbReference>
<dbReference type="SUPFAM" id="SSF55068">
    <property type="entry name" value="Peptide methionine sulfoxide reductase"/>
    <property type="match status" value="1"/>
</dbReference>
<proteinExistence type="inferred from homology"/>
<feature type="chain" id="PRO_0000138596" description="Peptide methionine sulfoxide reductase MsrA">
    <location>
        <begin position="1"/>
        <end position="169"/>
    </location>
</feature>
<feature type="active site" evidence="1">
    <location>
        <position position="10"/>
    </location>
</feature>
<reference key="1">
    <citation type="journal article" date="2002" name="Proc. Natl. Acad. Sci. U.S.A.">
        <title>Genome sequence of Streptococcus mutans UA159, a cariogenic dental pathogen.</title>
        <authorList>
            <person name="Ajdic D.J."/>
            <person name="McShan W.M."/>
            <person name="McLaughlin R.E."/>
            <person name="Savic G."/>
            <person name="Chang J."/>
            <person name="Carson M.B."/>
            <person name="Primeaux C."/>
            <person name="Tian R."/>
            <person name="Kenton S."/>
            <person name="Jia H.G."/>
            <person name="Lin S.P."/>
            <person name="Qian Y."/>
            <person name="Li S."/>
            <person name="Zhu H."/>
            <person name="Najar F.Z."/>
            <person name="Lai H."/>
            <person name="White J."/>
            <person name="Roe B.A."/>
            <person name="Ferretti J.J."/>
        </authorList>
    </citation>
    <scope>NUCLEOTIDE SEQUENCE [LARGE SCALE GENOMIC DNA]</scope>
    <source>
        <strain>ATCC 700610 / UA159</strain>
    </source>
</reference>
<name>MSRA_STRMU</name>
<organism>
    <name type="scientific">Streptococcus mutans serotype c (strain ATCC 700610 / UA159)</name>
    <dbReference type="NCBI Taxonomy" id="210007"/>
    <lineage>
        <taxon>Bacteria</taxon>
        <taxon>Bacillati</taxon>
        <taxon>Bacillota</taxon>
        <taxon>Bacilli</taxon>
        <taxon>Lactobacillales</taxon>
        <taxon>Streptococcaceae</taxon>
        <taxon>Streptococcus</taxon>
    </lineage>
</organism>
<keyword id="KW-0560">Oxidoreductase</keyword>
<keyword id="KW-1185">Reference proteome</keyword>
<evidence type="ECO:0000255" key="1">
    <source>
        <dbReference type="HAMAP-Rule" id="MF_01401"/>
    </source>
</evidence>
<accession>Q8DSY4</accession>
<gene>
    <name evidence="1" type="primary">msrA</name>
    <name type="ordered locus">SMU_1622</name>
</gene>
<sequence length="169" mass="19679">MERAIFAGGCFWCMVQPFEEQDGILSVRSGYTGGHVVNPTYEQVCSKMTGHTEAVEIIFDESKISYADLVEIYWRQTDPTDSFGQFEDRGDNYRPVIFYFDEQQRKIAEQSKANLQASGHFNRPIVTTIEAAQPFYEAEKDHQAFYRKNPERYARSSAIRHHFLKENWS</sequence>
<comment type="function">
    <text evidence="1">Has an important function as a repair enzyme for proteins that have been inactivated by oxidation. Catalyzes the reversible oxidation-reduction of methionine sulfoxide in proteins to methionine.</text>
</comment>
<comment type="catalytic activity">
    <reaction evidence="1">
        <text>L-methionyl-[protein] + [thioredoxin]-disulfide + H2O = L-methionyl-(S)-S-oxide-[protein] + [thioredoxin]-dithiol</text>
        <dbReference type="Rhea" id="RHEA:14217"/>
        <dbReference type="Rhea" id="RHEA-COMP:10698"/>
        <dbReference type="Rhea" id="RHEA-COMP:10700"/>
        <dbReference type="Rhea" id="RHEA-COMP:12313"/>
        <dbReference type="Rhea" id="RHEA-COMP:12315"/>
        <dbReference type="ChEBI" id="CHEBI:15377"/>
        <dbReference type="ChEBI" id="CHEBI:16044"/>
        <dbReference type="ChEBI" id="CHEBI:29950"/>
        <dbReference type="ChEBI" id="CHEBI:44120"/>
        <dbReference type="ChEBI" id="CHEBI:50058"/>
        <dbReference type="EC" id="1.8.4.11"/>
    </reaction>
</comment>
<comment type="catalytic activity">
    <reaction evidence="1">
        <text>[thioredoxin]-disulfide + L-methionine + H2O = L-methionine (S)-S-oxide + [thioredoxin]-dithiol</text>
        <dbReference type="Rhea" id="RHEA:19993"/>
        <dbReference type="Rhea" id="RHEA-COMP:10698"/>
        <dbReference type="Rhea" id="RHEA-COMP:10700"/>
        <dbReference type="ChEBI" id="CHEBI:15377"/>
        <dbReference type="ChEBI" id="CHEBI:29950"/>
        <dbReference type="ChEBI" id="CHEBI:50058"/>
        <dbReference type="ChEBI" id="CHEBI:57844"/>
        <dbReference type="ChEBI" id="CHEBI:58772"/>
        <dbReference type="EC" id="1.8.4.11"/>
    </reaction>
</comment>
<comment type="similarity">
    <text evidence="1">Belongs to the MsrA Met sulfoxide reductase family.</text>
</comment>
<protein>
    <recommendedName>
        <fullName evidence="1">Peptide methionine sulfoxide reductase MsrA</fullName>
        <shortName evidence="1">Protein-methionine-S-oxide reductase</shortName>
        <ecNumber evidence="1">1.8.4.11</ecNumber>
    </recommendedName>
    <alternativeName>
        <fullName evidence="1">Peptide-methionine (S)-S-oxide reductase</fullName>
        <shortName evidence="1">Peptide Met(O) reductase</shortName>
    </alternativeName>
</protein>